<protein>
    <recommendedName>
        <fullName>Probable serine/threonine-protein kinase abkA</fullName>
        <ecNumber>2.7.11.-</ecNumber>
    </recommendedName>
</protein>
<reference key="1">
    <citation type="journal article" date="2005" name="Nature">
        <title>The genome of the social amoeba Dictyostelium discoideum.</title>
        <authorList>
            <person name="Eichinger L."/>
            <person name="Pachebat J.A."/>
            <person name="Gloeckner G."/>
            <person name="Rajandream M.A."/>
            <person name="Sucgang R."/>
            <person name="Berriman M."/>
            <person name="Song J."/>
            <person name="Olsen R."/>
            <person name="Szafranski K."/>
            <person name="Xu Q."/>
            <person name="Tunggal B."/>
            <person name="Kummerfeld S."/>
            <person name="Madera M."/>
            <person name="Konfortov B.A."/>
            <person name="Rivero F."/>
            <person name="Bankier A.T."/>
            <person name="Lehmann R."/>
            <person name="Hamlin N."/>
            <person name="Davies R."/>
            <person name="Gaudet P."/>
            <person name="Fey P."/>
            <person name="Pilcher K."/>
            <person name="Chen G."/>
            <person name="Saunders D."/>
            <person name="Sodergren E.J."/>
            <person name="Davis P."/>
            <person name="Kerhornou A."/>
            <person name="Nie X."/>
            <person name="Hall N."/>
            <person name="Anjard C."/>
            <person name="Hemphill L."/>
            <person name="Bason N."/>
            <person name="Farbrother P."/>
            <person name="Desany B."/>
            <person name="Just E."/>
            <person name="Morio T."/>
            <person name="Rost R."/>
            <person name="Churcher C.M."/>
            <person name="Cooper J."/>
            <person name="Haydock S."/>
            <person name="van Driessche N."/>
            <person name="Cronin A."/>
            <person name="Goodhead I."/>
            <person name="Muzny D.M."/>
            <person name="Mourier T."/>
            <person name="Pain A."/>
            <person name="Lu M."/>
            <person name="Harper D."/>
            <person name="Lindsay R."/>
            <person name="Hauser H."/>
            <person name="James K.D."/>
            <person name="Quiles M."/>
            <person name="Madan Babu M."/>
            <person name="Saito T."/>
            <person name="Buchrieser C."/>
            <person name="Wardroper A."/>
            <person name="Felder M."/>
            <person name="Thangavelu M."/>
            <person name="Johnson D."/>
            <person name="Knights A."/>
            <person name="Loulseged H."/>
            <person name="Mungall K.L."/>
            <person name="Oliver K."/>
            <person name="Price C."/>
            <person name="Quail M.A."/>
            <person name="Urushihara H."/>
            <person name="Hernandez J."/>
            <person name="Rabbinowitsch E."/>
            <person name="Steffen D."/>
            <person name="Sanders M."/>
            <person name="Ma J."/>
            <person name="Kohara Y."/>
            <person name="Sharp S."/>
            <person name="Simmonds M.N."/>
            <person name="Spiegler S."/>
            <person name="Tivey A."/>
            <person name="Sugano S."/>
            <person name="White B."/>
            <person name="Walker D."/>
            <person name="Woodward J.R."/>
            <person name="Winckler T."/>
            <person name="Tanaka Y."/>
            <person name="Shaulsky G."/>
            <person name="Schleicher M."/>
            <person name="Weinstock G.M."/>
            <person name="Rosenthal A."/>
            <person name="Cox E.C."/>
            <person name="Chisholm R.L."/>
            <person name="Gibbs R.A."/>
            <person name="Loomis W.F."/>
            <person name="Platzer M."/>
            <person name="Kay R.R."/>
            <person name="Williams J.G."/>
            <person name="Dear P.H."/>
            <person name="Noegel A.A."/>
            <person name="Barrell B.G."/>
            <person name="Kuspa A."/>
        </authorList>
    </citation>
    <scope>NUCLEOTIDE SEQUENCE [LARGE SCALE GENOMIC DNA]</scope>
    <source>
        <strain>AX4</strain>
    </source>
</reference>
<reference key="2">
    <citation type="journal article" date="2006" name="PLoS Genet.">
        <title>The dictyostelium kinome -- analysis of the protein kinases from a simple model organism.</title>
        <authorList>
            <person name="Goldberg J.M."/>
            <person name="Manning G."/>
            <person name="Liu A."/>
            <person name="Fey P."/>
            <person name="Pilcher K.E."/>
            <person name="Xu Y."/>
            <person name="Smith J.L."/>
        </authorList>
    </citation>
    <scope>GENE FAMILY</scope>
    <scope>NOMENCLATURE</scope>
</reference>
<gene>
    <name type="primary">abkA</name>
    <name type="synonym">adckA</name>
    <name type="ORF">DDB_G0288749</name>
</gene>
<comment type="similarity">
    <text evidence="3">Belongs to the protein kinase superfamily. ADCK protein kinase family.</text>
</comment>
<name>ABKA_DICDI</name>
<proteinExistence type="inferred from homology"/>
<dbReference type="EC" id="2.7.11.-"/>
<dbReference type="EMBL" id="AAFI02000122">
    <property type="protein sequence ID" value="EAL63067.1"/>
    <property type="molecule type" value="Genomic_DNA"/>
</dbReference>
<dbReference type="RefSeq" id="XP_636572.1">
    <property type="nucleotide sequence ID" value="XM_631480.1"/>
</dbReference>
<dbReference type="SMR" id="Q54IH6"/>
<dbReference type="FunCoup" id="Q54IH6">
    <property type="interactions" value="41"/>
</dbReference>
<dbReference type="STRING" id="44689.Q54IH6"/>
<dbReference type="PaxDb" id="44689-DDB0216427"/>
<dbReference type="EnsemblProtists" id="EAL63067">
    <property type="protein sequence ID" value="EAL63067"/>
    <property type="gene ID" value="DDB_G0288749"/>
</dbReference>
<dbReference type="GeneID" id="8626786"/>
<dbReference type="KEGG" id="ddi:DDB_G0288749"/>
<dbReference type="dictyBase" id="DDB_G0288749">
    <property type="gene designation" value="abkA"/>
</dbReference>
<dbReference type="VEuPathDB" id="AmoebaDB:DDB_G0288749"/>
<dbReference type="eggNOG" id="KOG1234">
    <property type="taxonomic scope" value="Eukaryota"/>
</dbReference>
<dbReference type="HOGENOM" id="CLU_006533_9_0_1"/>
<dbReference type="InParanoid" id="Q54IH6"/>
<dbReference type="OMA" id="PEYYVPR"/>
<dbReference type="PhylomeDB" id="Q54IH6"/>
<dbReference type="Reactome" id="R-DDI-2142789">
    <property type="pathway name" value="Ubiquinol biosynthesis"/>
</dbReference>
<dbReference type="PRO" id="PR:Q54IH6"/>
<dbReference type="Proteomes" id="UP000002195">
    <property type="component" value="Chromosome 5"/>
</dbReference>
<dbReference type="GO" id="GO:0005524">
    <property type="term" value="F:ATP binding"/>
    <property type="evidence" value="ECO:0007669"/>
    <property type="project" value="UniProtKB-KW"/>
</dbReference>
<dbReference type="GO" id="GO:0004674">
    <property type="term" value="F:protein serine/threonine kinase activity"/>
    <property type="evidence" value="ECO:0007669"/>
    <property type="project" value="UniProtKB-KW"/>
</dbReference>
<dbReference type="GO" id="GO:0006744">
    <property type="term" value="P:ubiquinone biosynthetic process"/>
    <property type="evidence" value="ECO:0000318"/>
    <property type="project" value="GO_Central"/>
</dbReference>
<dbReference type="CDD" id="cd13970">
    <property type="entry name" value="ABC1_ADCK3"/>
    <property type="match status" value="1"/>
</dbReference>
<dbReference type="InterPro" id="IPR004147">
    <property type="entry name" value="ABC1_dom"/>
</dbReference>
<dbReference type="InterPro" id="IPR034646">
    <property type="entry name" value="ADCK3_dom"/>
</dbReference>
<dbReference type="InterPro" id="IPR051409">
    <property type="entry name" value="Atypical_kinase_ADCK"/>
</dbReference>
<dbReference type="InterPro" id="IPR011009">
    <property type="entry name" value="Kinase-like_dom_sf"/>
</dbReference>
<dbReference type="InterPro" id="IPR000719">
    <property type="entry name" value="Prot_kinase_dom"/>
</dbReference>
<dbReference type="PANTHER" id="PTHR43851">
    <property type="match status" value="1"/>
</dbReference>
<dbReference type="PANTHER" id="PTHR43851:SF3">
    <property type="entry name" value="COENZYME Q8"/>
    <property type="match status" value="1"/>
</dbReference>
<dbReference type="Pfam" id="PF03109">
    <property type="entry name" value="ABC1"/>
    <property type="match status" value="1"/>
</dbReference>
<dbReference type="SUPFAM" id="SSF56112">
    <property type="entry name" value="Protein kinase-like (PK-like)"/>
    <property type="match status" value="1"/>
</dbReference>
<dbReference type="PROSITE" id="PS50011">
    <property type="entry name" value="PROTEIN_KINASE_DOM"/>
    <property type="match status" value="1"/>
</dbReference>
<accession>Q54IH6</accession>
<organism>
    <name type="scientific">Dictyostelium discoideum</name>
    <name type="common">Social amoeba</name>
    <dbReference type="NCBI Taxonomy" id="44689"/>
    <lineage>
        <taxon>Eukaryota</taxon>
        <taxon>Amoebozoa</taxon>
        <taxon>Evosea</taxon>
        <taxon>Eumycetozoa</taxon>
        <taxon>Dictyostelia</taxon>
        <taxon>Dictyosteliales</taxon>
        <taxon>Dictyosteliaceae</taxon>
        <taxon>Dictyostelium</taxon>
    </lineage>
</organism>
<sequence>MGGRLNDLIQVAYGGKNVILSMMKNKTRQTSSVFINNLNSLNNNNNNISLKDKFKDLKDLKDNLNEKKINNDNDDDDEDNLIFDEKKDFLNENKNPELNYIKSKGHKIPSSQTSRFWEFTKLAVGVGAGFLGEKTKRTIDSSSSSSSPSSSYSAIFTDTNAERMAESFSRMRGAALKIGQVLSIQDESFLPPKFVEILDRVRKNANPIPLEQLYNTMSNELGENWRSKFQLFQDDPIAAASIGQVHRAITLDGKEVAVKVQYPGVADSITSDIKNLSSLLKMIVPETAYIEKSLESARSELLLETDYLNEASNQLKFKSLLESSINSGTNGSFKYLKDLYVPNVIMELTTKRILTTEFVHGTSIDKITIENHNQETRDWISKNILSLCLAELFEFNFMQVDPNWTNFVVDFENKRINLLDFGACRNYKSEFLFNYLKSIEGGVNRDINQILEYSLKLGYLTGDENKQMNDAQAKSILILSEPFSKLYYKENNLKTYPFNEKQIAKRISQLIPTMLKNRLKPPPEETYSLHRKLSGCYLVCSKLKSNINSTLIFNHFKNIFYKNYK</sequence>
<keyword id="KW-0067">ATP-binding</keyword>
<keyword id="KW-0175">Coiled coil</keyword>
<keyword id="KW-0418">Kinase</keyword>
<keyword id="KW-0547">Nucleotide-binding</keyword>
<keyword id="KW-1185">Reference proteome</keyword>
<keyword id="KW-0723">Serine/threonine-protein kinase</keyword>
<keyword id="KW-0808">Transferase</keyword>
<feature type="chain" id="PRO_0000367576" description="Probable serine/threonine-protein kinase abkA">
    <location>
        <begin position="1"/>
        <end position="565"/>
    </location>
</feature>
<feature type="domain" description="Protein kinase" evidence="2">
    <location>
        <begin position="231"/>
        <end position="565"/>
    </location>
</feature>
<feature type="coiled-coil region" evidence="1">
    <location>
        <begin position="44"/>
        <end position="77"/>
    </location>
</feature>
<feature type="active site" description="Proton acceptor" evidence="2">
    <location>
        <position position="401"/>
    </location>
</feature>
<feature type="binding site" evidence="2">
    <location>
        <begin position="237"/>
        <end position="245"/>
    </location>
    <ligand>
        <name>ATP</name>
        <dbReference type="ChEBI" id="CHEBI:30616"/>
    </ligand>
</feature>
<feature type="binding site" evidence="2">
    <location>
        <position position="259"/>
    </location>
    <ligand>
        <name>ATP</name>
        <dbReference type="ChEBI" id="CHEBI:30616"/>
    </ligand>
</feature>
<evidence type="ECO:0000255" key="1"/>
<evidence type="ECO:0000255" key="2">
    <source>
        <dbReference type="PROSITE-ProRule" id="PRU00159"/>
    </source>
</evidence>
<evidence type="ECO:0000305" key="3"/>